<accession>Q95W86</accession>
<accession>Q95W11</accession>
<dbReference type="EMBL" id="AF363775">
    <property type="protein sequence ID" value="AAL27537.1"/>
    <property type="molecule type" value="mRNA"/>
</dbReference>
<dbReference type="EMBL" id="AF383155">
    <property type="protein sequence ID" value="AAL27541.1"/>
    <property type="molecule type" value="mRNA"/>
</dbReference>
<dbReference type="SMR" id="Q95W86"/>
<dbReference type="GO" id="GO:0008218">
    <property type="term" value="P:bioluminescence"/>
    <property type="evidence" value="ECO:0007669"/>
    <property type="project" value="UniProtKB-KW"/>
</dbReference>
<dbReference type="Gene3D" id="3.30.1300.40">
    <property type="match status" value="1"/>
</dbReference>
<dbReference type="Gene3D" id="2.40.155.10">
    <property type="entry name" value="Green fluorescent protein"/>
    <property type="match status" value="1"/>
</dbReference>
<dbReference type="InterPro" id="IPR009017">
    <property type="entry name" value="GFP"/>
</dbReference>
<dbReference type="InterPro" id="IPR011584">
    <property type="entry name" value="GFP-related"/>
</dbReference>
<dbReference type="Pfam" id="PF01353">
    <property type="entry name" value="GFP"/>
    <property type="match status" value="1"/>
</dbReference>
<dbReference type="SUPFAM" id="SSF54511">
    <property type="entry name" value="GFP-like"/>
    <property type="match status" value="1"/>
</dbReference>
<proteinExistence type="evidence at protein level"/>
<reference evidence="5 7" key="1">
    <citation type="journal article" date="2001" name="FEBS Lett.">
        <title>GFP-like chromoproteins as a source of far-red fluorescent proteins.</title>
        <authorList>
            <person name="Gurskaya N.G."/>
            <person name="Fradkov A.F."/>
            <person name="Terskikh A."/>
            <person name="Matz M.V."/>
            <person name="Labas Y.A."/>
            <person name="Martynov V.I."/>
            <person name="Yanushevich Y.G."/>
            <person name="Lukyanov K.A."/>
            <person name="Lukyanov S.A."/>
        </authorList>
    </citation>
    <scope>NUCLEOTIDE SEQUENCE [MRNA]</scope>
    <scope>SUBUNIT</scope>
    <scope>MUTAGENESIS OF CYS-143</scope>
</reference>
<name>NFCP_CONGI</name>
<keyword id="KW-0157">Chromophore</keyword>
<keyword id="KW-0455">Luminescence</keyword>
<keyword id="KW-0599">Photoprotein</keyword>
<evidence type="ECO:0000250" key="1"/>
<evidence type="ECO:0000250" key="2">
    <source>
        <dbReference type="UniProtKB" id="P83690"/>
    </source>
</evidence>
<evidence type="ECO:0000269" key="3">
    <source>
    </source>
</evidence>
<evidence type="ECO:0000303" key="4">
    <source>
    </source>
</evidence>
<evidence type="ECO:0000305" key="5"/>
<evidence type="ECO:0000305" key="6">
    <source>
    </source>
</evidence>
<evidence type="ECO:0000312" key="7">
    <source>
        <dbReference type="EMBL" id="AAL27537.1"/>
    </source>
</evidence>
<organism>
    <name type="scientific">Condylactis gigantea</name>
    <name type="common">Giant Caribbean anemone</name>
    <name type="synonym">Condylactis passiflora</name>
    <dbReference type="NCBI Taxonomy" id="47073"/>
    <lineage>
        <taxon>Eukaryota</taxon>
        <taxon>Metazoa</taxon>
        <taxon>Cnidaria</taxon>
        <taxon>Anthozoa</taxon>
        <taxon>Hexacorallia</taxon>
        <taxon>Actiniaria</taxon>
        <taxon>Actiniidae</taxon>
        <taxon>Condylactis</taxon>
    </lineage>
</organism>
<sequence length="227" mass="25416">MAGLLKESMRIKIYMEGTVNGYHFKCEGEGDGNPFEGTQNMRIRVTEGAPLPFAFDILSPCCAYGSKTFIKHTSGIPDYFKQSFPEGFTWERTTIYEDGGVLTAHQDTSLEGNCLIYKVKVLGTNFPADGPVMKKISGGWEPCTEIVYQDNGVLRGRNVMALKVSGRPPLICHLHSTYRSKKACALTMPGFHFADLRIQMPKKKKDEYFELYEASVARYSDVPEKAT</sequence>
<protein>
    <recommendedName>
        <fullName evidence="4">GFP-like non-fluorescent chromoprotein</fullName>
    </recommendedName>
    <alternativeName>
        <fullName evidence="4">cgCP</fullName>
    </alternativeName>
    <alternativeName>
        <fullName evidence="4">cpCP</fullName>
    </alternativeName>
</protein>
<feature type="chain" id="PRO_0000192583" description="GFP-like non-fluorescent chromoprotein">
    <location>
        <begin position="1"/>
        <end position="227"/>
    </location>
</feature>
<feature type="modified residue" description="2,3-didehydrotyrosine" evidence="2">
    <location>
        <position position="64"/>
    </location>
</feature>
<feature type="cross-link" description="5-imidazolinone (Ala-Gly)" evidence="1">
    <location>
        <begin position="63"/>
        <end position="65"/>
    </location>
</feature>
<feature type="mutagenesis site" description="Produces a fluorescent form." evidence="3">
    <original>C</original>
    <variation>S</variation>
    <location>
        <position position="143"/>
    </location>
</feature>
<feature type="sequence conflict" description="In Ref. 1; AAL27541." evidence="5" ref="1">
    <original>F</original>
    <variation>Y</variation>
    <location>
        <position position="35"/>
    </location>
</feature>
<feature type="sequence conflict" description="In Ref. 1; AAL27541." evidence="5" ref="1">
    <original>I</original>
    <variation>N</variation>
    <location>
        <position position="116"/>
    </location>
</feature>
<feature type="sequence conflict" description="In Ref. 1; AAL27541." evidence="5" ref="1">
    <original>K</original>
    <variation>N</variation>
    <location>
        <position position="135"/>
    </location>
</feature>
<feature type="sequence conflict" description="In Ref. 1; AAL27541." evidence="5" ref="1">
    <original>V</original>
    <variation>L</variation>
    <location>
        <position position="222"/>
    </location>
</feature>
<feature type="sequence conflict" description="In Ref. 1; AAL27541." evidence="5" ref="1">
    <original>T</original>
    <variation>N</variation>
    <location>
        <position position="227"/>
    </location>
</feature>
<comment type="function">
    <text>Non-fluorescent pigment protein that is mauve in color. The wild-type form is non-fluorescent.</text>
</comment>
<comment type="biophysicochemical properties">
    <absorption>
        <max>571 nm</max>
    </absorption>
</comment>
<comment type="subunit">
    <text evidence="3">Homotetramer.</text>
</comment>
<comment type="PTM">
    <text>Contains a chromophore consisting of modified amino acid residues. The chromophore is formed by autocatalytic backbone condensation between Xaa-N and Gly-(N+2), and oxidation of Tyr-(N+1) to didehydrotyrosine. Maturation of the chromophore requires nothing other than molecular oxygen. The precise stereochemistry of the tyrosine has not been determined.</text>
</comment>
<comment type="biotechnology">
    <text evidence="5">Fluorescent proteins have become a useful and ubiquitous tool for making chimeric proteins, where they function as a fluorescent protein tag. Typically they tolerate N- and C-terminal fusion to a broad variety of proteins. They have been expressed in most known cell types and are used as a noninvasive fluorescent marker in living cells and organisms. They enable a wide range of applications where they have functioned as a cell lineage tracer, reporter of gene expression, or as a measure of protein-protein interactions.</text>
</comment>
<comment type="miscellaneous">
    <text>Fluorescence excitation of the Ser-143 mutant is at 587 nm and emission at 622 nm.</text>
</comment>
<comment type="similarity">
    <text evidence="5">Belongs to the GFP family.</text>
</comment>
<comment type="caution">
    <text evidence="6">Gurskaya et al., 2001 describe 2 different proteins coming from C.gigantea (cgCP) and C.passiflora (cpCP). Since both C.passiflora and C.passiflora species are synonym, the 2 proteins are merged and some conflicts are reported.</text>
</comment>